<gene>
    <name type="ordered locus">MG027</name>
</gene>
<proteinExistence type="evidence at protein level"/>
<accession>P47273</accession>
<name>Y027_MYCGE</name>
<protein>
    <recommendedName>
        <fullName>Uncharacterized protein MG027</fullName>
    </recommendedName>
</protein>
<sequence>MAITVKGLTNKLTRTQRRIAVVEFIFSLLFFLPKEAEVIQADFLEYDTKERQLNEWQKLIVKAFSENIFSFQKKIEEQQLKNQLEIQTKYNKISGKKIDLLTTAVVLCALSEQKAHNTDKPLLISEALLIMDHYSQGAEKKQTHALLDKLL</sequence>
<evidence type="ECO:0007829" key="1">
    <source>
        <dbReference type="PDB" id="1Q8C"/>
    </source>
</evidence>
<keyword id="KW-0002">3D-structure</keyword>
<keyword id="KW-1185">Reference proteome</keyword>
<reference key="1">
    <citation type="journal article" date="1995" name="Science">
        <title>The minimal gene complement of Mycoplasma genitalium.</title>
        <authorList>
            <person name="Fraser C.M."/>
            <person name="Gocayne J.D."/>
            <person name="White O."/>
            <person name="Adams M.D."/>
            <person name="Clayton R.A."/>
            <person name="Fleischmann R.D."/>
            <person name="Bult C.J."/>
            <person name="Kerlavage A.R."/>
            <person name="Sutton G.G."/>
            <person name="Kelley J.M."/>
            <person name="Fritchman J.L."/>
            <person name="Weidman J.F."/>
            <person name="Small K.V."/>
            <person name="Sandusky M."/>
            <person name="Fuhrmann J.L."/>
            <person name="Nguyen D.T."/>
            <person name="Utterback T.R."/>
            <person name="Saudek D.M."/>
            <person name="Phillips C.A."/>
            <person name="Merrick J.M."/>
            <person name="Tomb J.-F."/>
            <person name="Dougherty B.A."/>
            <person name="Bott K.F."/>
            <person name="Hu P.-C."/>
            <person name="Lucier T.S."/>
            <person name="Peterson S.N."/>
            <person name="Smith H.O."/>
            <person name="Hutchison C.A. III"/>
            <person name="Venter J.C."/>
        </authorList>
    </citation>
    <scope>NUCLEOTIDE SEQUENCE [LARGE SCALE GENOMIC DNA]</scope>
    <source>
        <strain>ATCC 33530 / DSM 19775 / NCTC 10195 / G37</strain>
    </source>
</reference>
<dbReference type="EMBL" id="L43967">
    <property type="protein sequence ID" value="AAC71243.1"/>
    <property type="molecule type" value="Genomic_DNA"/>
</dbReference>
<dbReference type="PIR" id="I64202">
    <property type="entry name" value="I64202"/>
</dbReference>
<dbReference type="PDB" id="1Q8C">
    <property type="method" value="X-ray"/>
    <property type="resolution" value="2.00 A"/>
    <property type="chains" value="A=1-151"/>
</dbReference>
<dbReference type="PDBsum" id="1Q8C"/>
<dbReference type="SMR" id="P47273"/>
<dbReference type="STRING" id="243273.MG_027"/>
<dbReference type="KEGG" id="mge:MG_027"/>
<dbReference type="eggNOG" id="ENOG5031ZA8">
    <property type="taxonomic scope" value="Bacteria"/>
</dbReference>
<dbReference type="HOGENOM" id="CLU_1766001_0_0_14"/>
<dbReference type="InParanoid" id="P47273"/>
<dbReference type="EvolutionaryTrace" id="P47273"/>
<dbReference type="Proteomes" id="UP000000807">
    <property type="component" value="Chromosome"/>
</dbReference>
<dbReference type="DisProt" id="DP02588"/>
<dbReference type="Gene3D" id="1.10.940.10">
    <property type="entry name" value="NusB-like"/>
    <property type="match status" value="1"/>
</dbReference>
<dbReference type="InterPro" id="IPR015268">
    <property type="entry name" value="DUF1948"/>
</dbReference>
<dbReference type="InterPro" id="IPR035926">
    <property type="entry name" value="NusB-like_sf"/>
</dbReference>
<dbReference type="Pfam" id="PF09185">
    <property type="entry name" value="DUF1948"/>
    <property type="match status" value="1"/>
</dbReference>
<dbReference type="SUPFAM" id="SSF48013">
    <property type="entry name" value="NusB-like"/>
    <property type="match status" value="1"/>
</dbReference>
<feature type="chain" id="PRO_0000210389" description="Uncharacterized protein MG027">
    <location>
        <begin position="1"/>
        <end position="151"/>
    </location>
</feature>
<feature type="helix" evidence="1">
    <location>
        <begin position="14"/>
        <end position="28"/>
    </location>
</feature>
<feature type="helix" evidence="1">
    <location>
        <begin position="29"/>
        <end position="31"/>
    </location>
</feature>
<feature type="helix" evidence="1">
    <location>
        <begin position="36"/>
        <end position="45"/>
    </location>
</feature>
<feature type="turn" evidence="1">
    <location>
        <begin position="49"/>
        <end position="51"/>
    </location>
</feature>
<feature type="helix" evidence="1">
    <location>
        <begin position="55"/>
        <end position="81"/>
    </location>
</feature>
<feature type="helix" evidence="1">
    <location>
        <begin position="100"/>
        <end position="116"/>
    </location>
</feature>
<feature type="helix" evidence="1">
    <location>
        <begin position="120"/>
        <end position="133"/>
    </location>
</feature>
<feature type="turn" evidence="1">
    <location>
        <begin position="145"/>
        <end position="147"/>
    </location>
</feature>
<organism>
    <name type="scientific">Mycoplasma genitalium (strain ATCC 33530 / DSM 19775 / NCTC 10195 / G37)</name>
    <name type="common">Mycoplasmoides genitalium</name>
    <dbReference type="NCBI Taxonomy" id="243273"/>
    <lineage>
        <taxon>Bacteria</taxon>
        <taxon>Bacillati</taxon>
        <taxon>Mycoplasmatota</taxon>
        <taxon>Mycoplasmoidales</taxon>
        <taxon>Mycoplasmoidaceae</taxon>
        <taxon>Mycoplasmoides</taxon>
    </lineage>
</organism>